<gene>
    <name type="ORF">SPBC713.03</name>
</gene>
<comment type="catalytic activity">
    <reaction>
        <text>(R)-lactate + 2 Fe(III)-[cytochrome c] = 2 Fe(II)-[cytochrome c] + pyruvate + 2 H(+)</text>
        <dbReference type="Rhea" id="RHEA:13521"/>
        <dbReference type="Rhea" id="RHEA-COMP:10350"/>
        <dbReference type="Rhea" id="RHEA-COMP:14399"/>
        <dbReference type="ChEBI" id="CHEBI:15361"/>
        <dbReference type="ChEBI" id="CHEBI:15378"/>
        <dbReference type="ChEBI" id="CHEBI:16004"/>
        <dbReference type="ChEBI" id="CHEBI:29033"/>
        <dbReference type="ChEBI" id="CHEBI:29034"/>
        <dbReference type="EC" id="1.1.2.4"/>
    </reaction>
</comment>
<comment type="cofactor">
    <cofactor evidence="4">
        <name>FAD</name>
        <dbReference type="ChEBI" id="CHEBI:57692"/>
    </cofactor>
</comment>
<comment type="subcellular location">
    <subcellularLocation>
        <location evidence="3">Mitochondrion matrix</location>
    </subcellularLocation>
</comment>
<comment type="similarity">
    <text evidence="4">Belongs to the FAD-binding oxidoreductase/transferase type 4 family.</text>
</comment>
<evidence type="ECO:0000255" key="1"/>
<evidence type="ECO:0000255" key="2">
    <source>
        <dbReference type="PROSITE-ProRule" id="PRU00718"/>
    </source>
</evidence>
<evidence type="ECO:0000269" key="3">
    <source>
    </source>
</evidence>
<evidence type="ECO:0000305" key="4"/>
<keyword id="KW-0274">FAD</keyword>
<keyword id="KW-0285">Flavoprotein</keyword>
<keyword id="KW-0496">Mitochondrion</keyword>
<keyword id="KW-0560">Oxidoreductase</keyword>
<keyword id="KW-1185">Reference proteome</keyword>
<keyword id="KW-0809">Transit peptide</keyword>
<protein>
    <recommendedName>
        <fullName>Putative D-lactate dehydrogenase C713.03, mitochondrial</fullName>
        <ecNumber>1.1.2.4</ecNumber>
    </recommendedName>
</protein>
<feature type="transit peptide" description="Mitochondrion" evidence="1">
    <location>
        <begin position="1"/>
        <end status="unknown"/>
    </location>
</feature>
<feature type="chain" id="PRO_0000317236" description="Putative D-lactate dehydrogenase C713.03, mitochondrial">
    <location>
        <begin status="unknown"/>
        <end position="526"/>
    </location>
</feature>
<feature type="domain" description="FAD-binding PCMH-type" evidence="2">
    <location>
        <begin position="93"/>
        <end position="272"/>
    </location>
</feature>
<reference key="1">
    <citation type="journal article" date="2002" name="Nature">
        <title>The genome sequence of Schizosaccharomyces pombe.</title>
        <authorList>
            <person name="Wood V."/>
            <person name="Gwilliam R."/>
            <person name="Rajandream M.A."/>
            <person name="Lyne M.H."/>
            <person name="Lyne R."/>
            <person name="Stewart A."/>
            <person name="Sgouros J.G."/>
            <person name="Peat N."/>
            <person name="Hayles J."/>
            <person name="Baker S.G."/>
            <person name="Basham D."/>
            <person name="Bowman S."/>
            <person name="Brooks K."/>
            <person name="Brown D."/>
            <person name="Brown S."/>
            <person name="Chillingworth T."/>
            <person name="Churcher C.M."/>
            <person name="Collins M."/>
            <person name="Connor R."/>
            <person name="Cronin A."/>
            <person name="Davis P."/>
            <person name="Feltwell T."/>
            <person name="Fraser A."/>
            <person name="Gentles S."/>
            <person name="Goble A."/>
            <person name="Hamlin N."/>
            <person name="Harris D.E."/>
            <person name="Hidalgo J."/>
            <person name="Hodgson G."/>
            <person name="Holroyd S."/>
            <person name="Hornsby T."/>
            <person name="Howarth S."/>
            <person name="Huckle E.J."/>
            <person name="Hunt S."/>
            <person name="Jagels K."/>
            <person name="James K.D."/>
            <person name="Jones L."/>
            <person name="Jones M."/>
            <person name="Leather S."/>
            <person name="McDonald S."/>
            <person name="McLean J."/>
            <person name="Mooney P."/>
            <person name="Moule S."/>
            <person name="Mungall K.L."/>
            <person name="Murphy L.D."/>
            <person name="Niblett D."/>
            <person name="Odell C."/>
            <person name="Oliver K."/>
            <person name="O'Neil S."/>
            <person name="Pearson D."/>
            <person name="Quail M.A."/>
            <person name="Rabbinowitsch E."/>
            <person name="Rutherford K.M."/>
            <person name="Rutter S."/>
            <person name="Saunders D."/>
            <person name="Seeger K."/>
            <person name="Sharp S."/>
            <person name="Skelton J."/>
            <person name="Simmonds M.N."/>
            <person name="Squares R."/>
            <person name="Squares S."/>
            <person name="Stevens K."/>
            <person name="Taylor K."/>
            <person name="Taylor R.G."/>
            <person name="Tivey A."/>
            <person name="Walsh S.V."/>
            <person name="Warren T."/>
            <person name="Whitehead S."/>
            <person name="Woodward J.R."/>
            <person name="Volckaert G."/>
            <person name="Aert R."/>
            <person name="Robben J."/>
            <person name="Grymonprez B."/>
            <person name="Weltjens I."/>
            <person name="Vanstreels E."/>
            <person name="Rieger M."/>
            <person name="Schaefer M."/>
            <person name="Mueller-Auer S."/>
            <person name="Gabel C."/>
            <person name="Fuchs M."/>
            <person name="Duesterhoeft A."/>
            <person name="Fritzc C."/>
            <person name="Holzer E."/>
            <person name="Moestl D."/>
            <person name="Hilbert H."/>
            <person name="Borzym K."/>
            <person name="Langer I."/>
            <person name="Beck A."/>
            <person name="Lehrach H."/>
            <person name="Reinhardt R."/>
            <person name="Pohl T.M."/>
            <person name="Eger P."/>
            <person name="Zimmermann W."/>
            <person name="Wedler H."/>
            <person name="Wambutt R."/>
            <person name="Purnelle B."/>
            <person name="Goffeau A."/>
            <person name="Cadieu E."/>
            <person name="Dreano S."/>
            <person name="Gloux S."/>
            <person name="Lelaure V."/>
            <person name="Mottier S."/>
            <person name="Galibert F."/>
            <person name="Aves S.J."/>
            <person name="Xiang Z."/>
            <person name="Hunt C."/>
            <person name="Moore K."/>
            <person name="Hurst S.M."/>
            <person name="Lucas M."/>
            <person name="Rochet M."/>
            <person name="Gaillardin C."/>
            <person name="Tallada V.A."/>
            <person name="Garzon A."/>
            <person name="Thode G."/>
            <person name="Daga R.R."/>
            <person name="Cruzado L."/>
            <person name="Jimenez J."/>
            <person name="Sanchez M."/>
            <person name="del Rey F."/>
            <person name="Benito J."/>
            <person name="Dominguez A."/>
            <person name="Revuelta J.L."/>
            <person name="Moreno S."/>
            <person name="Armstrong J."/>
            <person name="Forsburg S.L."/>
            <person name="Cerutti L."/>
            <person name="Lowe T."/>
            <person name="McCombie W.R."/>
            <person name="Paulsen I."/>
            <person name="Potashkin J."/>
            <person name="Shpakovski G.V."/>
            <person name="Ussery D."/>
            <person name="Barrell B.G."/>
            <person name="Nurse P."/>
        </authorList>
    </citation>
    <scope>NUCLEOTIDE SEQUENCE [LARGE SCALE GENOMIC DNA]</scope>
    <source>
        <strain>972 / ATCC 24843</strain>
    </source>
</reference>
<reference key="2">
    <citation type="journal article" date="2006" name="Nat. Biotechnol.">
        <title>ORFeome cloning and global analysis of protein localization in the fission yeast Schizosaccharomyces pombe.</title>
        <authorList>
            <person name="Matsuyama A."/>
            <person name="Arai R."/>
            <person name="Yashiroda Y."/>
            <person name="Shirai A."/>
            <person name="Kamata A."/>
            <person name="Sekido S."/>
            <person name="Kobayashi Y."/>
            <person name="Hashimoto A."/>
            <person name="Hamamoto M."/>
            <person name="Hiraoka Y."/>
            <person name="Horinouchi S."/>
            <person name="Yoshida M."/>
        </authorList>
    </citation>
    <scope>SUBCELLULAR LOCATION [LARGE SCALE ANALYSIS]</scope>
</reference>
<proteinExistence type="inferred from homology"/>
<name>YN53_SCHPO</name>
<dbReference type="EC" id="1.1.2.4"/>
<dbReference type="EMBL" id="CU329671">
    <property type="protein sequence ID" value="CAC22604.1"/>
    <property type="molecule type" value="Genomic_DNA"/>
</dbReference>
<dbReference type="SMR" id="Q9C1X2"/>
<dbReference type="BioGRID" id="277666">
    <property type="interactions" value="12"/>
</dbReference>
<dbReference type="FunCoup" id="Q9C1X2">
    <property type="interactions" value="334"/>
</dbReference>
<dbReference type="STRING" id="284812.Q9C1X2"/>
<dbReference type="PaxDb" id="4896-SPBC713.03.1"/>
<dbReference type="EnsemblFungi" id="SPBC713.03.1">
    <property type="protein sequence ID" value="SPBC713.03.1:pep"/>
    <property type="gene ID" value="SPBC713.03"/>
</dbReference>
<dbReference type="KEGG" id="spo:2541151"/>
<dbReference type="PomBase" id="SPBC713.03"/>
<dbReference type="VEuPathDB" id="FungiDB:SPBC713.03"/>
<dbReference type="eggNOG" id="KOG1232">
    <property type="taxonomic scope" value="Eukaryota"/>
</dbReference>
<dbReference type="HOGENOM" id="CLU_017779_4_1_1"/>
<dbReference type="InParanoid" id="Q9C1X2"/>
<dbReference type="OMA" id="YNEDWMR"/>
<dbReference type="PhylomeDB" id="Q9C1X2"/>
<dbReference type="Reactome" id="R-SPO-880009">
    <property type="pathway name" value="Interconversion of 2-oxoglutarate and 2-hydroxyglutarate"/>
</dbReference>
<dbReference type="PRO" id="PR:Q9C1X2"/>
<dbReference type="Proteomes" id="UP000002485">
    <property type="component" value="Chromosome II"/>
</dbReference>
<dbReference type="GO" id="GO:0005759">
    <property type="term" value="C:mitochondrial matrix"/>
    <property type="evidence" value="ECO:0000266"/>
    <property type="project" value="PomBase"/>
</dbReference>
<dbReference type="GO" id="GO:0005739">
    <property type="term" value="C:mitochondrion"/>
    <property type="evidence" value="ECO:0007005"/>
    <property type="project" value="PomBase"/>
</dbReference>
<dbReference type="GO" id="GO:0099615">
    <property type="term" value="F:(D)-2-hydroxyglutarate-pyruvate transhydrogenase activity"/>
    <property type="evidence" value="ECO:0000266"/>
    <property type="project" value="PomBase"/>
</dbReference>
<dbReference type="GO" id="GO:0004458">
    <property type="term" value="F:D-lactate dehydrogenase (cytochrome) activity"/>
    <property type="evidence" value="ECO:0000266"/>
    <property type="project" value="PomBase"/>
</dbReference>
<dbReference type="GO" id="GO:0071949">
    <property type="term" value="F:FAD binding"/>
    <property type="evidence" value="ECO:0007669"/>
    <property type="project" value="InterPro"/>
</dbReference>
<dbReference type="GO" id="GO:0006091">
    <property type="term" value="P:generation of precursor metabolites and energy"/>
    <property type="evidence" value="ECO:0000305"/>
    <property type="project" value="PomBase"/>
</dbReference>
<dbReference type="GO" id="GO:1903457">
    <property type="term" value="P:lactate catabolic process"/>
    <property type="evidence" value="ECO:0000266"/>
    <property type="project" value="PomBase"/>
</dbReference>
<dbReference type="FunFam" id="3.30.70.2190:FF:000001">
    <property type="entry name" value="D-2-hydroxyglutarate dehydrogenase mitochondrial"/>
    <property type="match status" value="1"/>
</dbReference>
<dbReference type="FunFam" id="3.30.70.2740:FF:000002">
    <property type="entry name" value="D-2-hydroxyglutarate dehydrogenase mitochondrial"/>
    <property type="match status" value="1"/>
</dbReference>
<dbReference type="FunFam" id="3.30.43.10:FF:000002">
    <property type="entry name" value="D-2-hydroxyglutarate dehydrogenase, mitochondrial"/>
    <property type="match status" value="1"/>
</dbReference>
<dbReference type="FunFam" id="3.30.465.10:FF:000001">
    <property type="entry name" value="D-2-hydroxyglutarate dehydrogenase, mitochondrial"/>
    <property type="match status" value="1"/>
</dbReference>
<dbReference type="FunFam" id="1.10.45.10:FF:000001">
    <property type="entry name" value="D-lactate dehydrogenase mitochondrial"/>
    <property type="match status" value="1"/>
</dbReference>
<dbReference type="Gene3D" id="3.30.465.10">
    <property type="match status" value="1"/>
</dbReference>
<dbReference type="Gene3D" id="3.30.70.2190">
    <property type="match status" value="1"/>
</dbReference>
<dbReference type="Gene3D" id="3.30.70.2740">
    <property type="match status" value="1"/>
</dbReference>
<dbReference type="Gene3D" id="3.30.43.10">
    <property type="entry name" value="Uridine Diphospho-n-acetylenolpyruvylglucosamine Reductase, domain 2"/>
    <property type="match status" value="1"/>
</dbReference>
<dbReference type="Gene3D" id="1.10.45.10">
    <property type="entry name" value="Vanillyl-alcohol Oxidase, Chain A, domain 4"/>
    <property type="match status" value="1"/>
</dbReference>
<dbReference type="InterPro" id="IPR004113">
    <property type="entry name" value="FAD-bd_oxidored_4_C"/>
</dbReference>
<dbReference type="InterPro" id="IPR016166">
    <property type="entry name" value="FAD-bd_PCMH"/>
</dbReference>
<dbReference type="InterPro" id="IPR036318">
    <property type="entry name" value="FAD-bd_PCMH-like_sf"/>
</dbReference>
<dbReference type="InterPro" id="IPR016167">
    <property type="entry name" value="FAD-bd_PCMH_sub1"/>
</dbReference>
<dbReference type="InterPro" id="IPR016169">
    <property type="entry name" value="FAD-bd_PCMH_sub2"/>
</dbReference>
<dbReference type="InterPro" id="IPR016164">
    <property type="entry name" value="FAD-linked_Oxase-like_C"/>
</dbReference>
<dbReference type="InterPro" id="IPR051264">
    <property type="entry name" value="FAD-oxidored/transferase_4"/>
</dbReference>
<dbReference type="InterPro" id="IPR006094">
    <property type="entry name" value="Oxid_FAD_bind_N"/>
</dbReference>
<dbReference type="InterPro" id="IPR016171">
    <property type="entry name" value="Vanillyl_alc_oxidase_C-sub2"/>
</dbReference>
<dbReference type="PANTHER" id="PTHR43716">
    <property type="entry name" value="D-2-HYDROXYGLUTARATE DEHYDROGENASE, MITOCHONDRIAL"/>
    <property type="match status" value="1"/>
</dbReference>
<dbReference type="PANTHER" id="PTHR43716:SF1">
    <property type="entry name" value="D-2-HYDROXYGLUTARATE DEHYDROGENASE, MITOCHONDRIAL"/>
    <property type="match status" value="1"/>
</dbReference>
<dbReference type="Pfam" id="PF02913">
    <property type="entry name" value="FAD-oxidase_C"/>
    <property type="match status" value="1"/>
</dbReference>
<dbReference type="Pfam" id="PF01565">
    <property type="entry name" value="FAD_binding_4"/>
    <property type="match status" value="1"/>
</dbReference>
<dbReference type="SUPFAM" id="SSF56176">
    <property type="entry name" value="FAD-binding/transporter-associated domain-like"/>
    <property type="match status" value="1"/>
</dbReference>
<dbReference type="SUPFAM" id="SSF55103">
    <property type="entry name" value="FAD-linked oxidases, C-terminal domain"/>
    <property type="match status" value="1"/>
</dbReference>
<dbReference type="PROSITE" id="PS51387">
    <property type="entry name" value="FAD_PCMH"/>
    <property type="match status" value="1"/>
</dbReference>
<accession>Q9C1X2</accession>
<sequence length="526" mass="58473">MHSLQCRRVIPFGKLSLSLHAPRNALRFVHKPAFTFESYKSLHRDPKYAKLSEQDVQVFKSIIGKDGSLIDGLDKSTDPADLDAFNIDWMNKYRGKTQLALKPKTTQQVSEILKYCNQKKLAVVPQGGNTGLVGGSVPVFDEIVLNLGLMNQIHTFDEISGVITLDSGVILENADNFLAEKGYMFPLDLGAKGSCQVGGCAATAAGGLRLLRYGSLHGSILGMEAVLPDGTILDNLVTLRKDNTGLDIKQLFIGSEGYLGVITKLSVICPKRPSSTNVAFFGVPSYENVLKAFSETRSHLTEILSAFELMDNTSQTLVDKYSGTQRPLEDEHPFYVLVETQGSNKEHDEQKITALVEDLLEKEIISDGVLAQDESQLRVLWERREGITECLAKAGSGVYKYDVSLPLPVLYDLVNDTKKRLIEFNLLDDTPEHPVIDVVGFGHMGDGNLHLNIAVRQFDKRVEKCLEPWVYEWVSRHRGSISAEHGLGLLKKPFVGYSKSKEMIHLMKTLKNVFDPNGIMLPYKYV</sequence>
<organism>
    <name type="scientific">Schizosaccharomyces pombe (strain 972 / ATCC 24843)</name>
    <name type="common">Fission yeast</name>
    <dbReference type="NCBI Taxonomy" id="284812"/>
    <lineage>
        <taxon>Eukaryota</taxon>
        <taxon>Fungi</taxon>
        <taxon>Dikarya</taxon>
        <taxon>Ascomycota</taxon>
        <taxon>Taphrinomycotina</taxon>
        <taxon>Schizosaccharomycetes</taxon>
        <taxon>Schizosaccharomycetales</taxon>
        <taxon>Schizosaccharomycetaceae</taxon>
        <taxon>Schizosaccharomyces</taxon>
    </lineage>
</organism>